<dbReference type="EC" id="5.2.1.8"/>
<dbReference type="EMBL" id="AB010692">
    <property type="protein sequence ID" value="BAB09985.1"/>
    <property type="molecule type" value="Genomic_DNA"/>
</dbReference>
<dbReference type="EMBL" id="CP002688">
    <property type="protein sequence ID" value="AED90872.1"/>
    <property type="molecule type" value="Genomic_DNA"/>
</dbReference>
<dbReference type="EMBL" id="DQ487720">
    <property type="protein sequence ID" value="ABF59282.1"/>
    <property type="molecule type" value="mRNA"/>
</dbReference>
<dbReference type="EMBL" id="AJ242484">
    <property type="protein sequence ID" value="CAB64724.1"/>
    <property type="molecule type" value="mRNA"/>
</dbReference>
<dbReference type="RefSeq" id="NP_196161.1">
    <property type="nucleotide sequence ID" value="NM_120624.1"/>
</dbReference>
<dbReference type="SMR" id="Q9FLB3"/>
<dbReference type="BioGRID" id="15704">
    <property type="interactions" value="9"/>
</dbReference>
<dbReference type="STRING" id="3702.Q9FLB3"/>
<dbReference type="PaxDb" id="3702-AT5G05420.1"/>
<dbReference type="EnsemblPlants" id="AT5G05420.1">
    <property type="protein sequence ID" value="AT5G05420.1"/>
    <property type="gene ID" value="AT5G05420"/>
</dbReference>
<dbReference type="GeneID" id="830425"/>
<dbReference type="Gramene" id="AT5G05420.1">
    <property type="protein sequence ID" value="AT5G05420.1"/>
    <property type="gene ID" value="AT5G05420"/>
</dbReference>
<dbReference type="KEGG" id="ath:AT5G05420"/>
<dbReference type="Araport" id="AT5G05420"/>
<dbReference type="TAIR" id="AT5G05420"/>
<dbReference type="eggNOG" id="KOG0552">
    <property type="taxonomic scope" value="Eukaryota"/>
</dbReference>
<dbReference type="HOGENOM" id="CLU_013615_12_0_1"/>
<dbReference type="InParanoid" id="Q9FLB3"/>
<dbReference type="OMA" id="WDEGFAG"/>
<dbReference type="PhylomeDB" id="Q9FLB3"/>
<dbReference type="PRO" id="PR:Q9FLB3"/>
<dbReference type="Proteomes" id="UP000006548">
    <property type="component" value="Chromosome 5"/>
</dbReference>
<dbReference type="ExpressionAtlas" id="Q9FLB3">
    <property type="expression patterns" value="baseline and differential"/>
</dbReference>
<dbReference type="GO" id="GO:0003755">
    <property type="term" value="F:peptidyl-prolyl cis-trans isomerase activity"/>
    <property type="evidence" value="ECO:0007669"/>
    <property type="project" value="UniProtKB-KW"/>
</dbReference>
<dbReference type="FunFam" id="3.10.50.40:FF:000006">
    <property type="entry name" value="Peptidyl-prolyl cis-trans isomerase"/>
    <property type="match status" value="1"/>
</dbReference>
<dbReference type="Gene3D" id="3.10.50.40">
    <property type="match status" value="1"/>
</dbReference>
<dbReference type="InterPro" id="IPR046357">
    <property type="entry name" value="PPIase_dom_sf"/>
</dbReference>
<dbReference type="InterPro" id="IPR001179">
    <property type="entry name" value="PPIase_FKBP_dom"/>
</dbReference>
<dbReference type="PANTHER" id="PTHR43811:SF19">
    <property type="entry name" value="39 KDA FK506-BINDING NUCLEAR PROTEIN"/>
    <property type="match status" value="1"/>
</dbReference>
<dbReference type="PANTHER" id="PTHR43811">
    <property type="entry name" value="FKBP-TYPE PEPTIDYL-PROLYL CIS-TRANS ISOMERASE FKPA"/>
    <property type="match status" value="1"/>
</dbReference>
<dbReference type="Pfam" id="PF00254">
    <property type="entry name" value="FKBP_C"/>
    <property type="match status" value="1"/>
</dbReference>
<dbReference type="SUPFAM" id="SSF54534">
    <property type="entry name" value="FKBP-like"/>
    <property type="match status" value="1"/>
</dbReference>
<dbReference type="PROSITE" id="PS50059">
    <property type="entry name" value="FKBP_PPIASE"/>
    <property type="match status" value="1"/>
</dbReference>
<organism>
    <name type="scientific">Arabidopsis thaliana</name>
    <name type="common">Mouse-ear cress</name>
    <dbReference type="NCBI Taxonomy" id="3702"/>
    <lineage>
        <taxon>Eukaryota</taxon>
        <taxon>Viridiplantae</taxon>
        <taxon>Streptophyta</taxon>
        <taxon>Embryophyta</taxon>
        <taxon>Tracheophyta</taxon>
        <taxon>Spermatophyta</taxon>
        <taxon>Magnoliopsida</taxon>
        <taxon>eudicotyledons</taxon>
        <taxon>Gunneridae</taxon>
        <taxon>Pentapetalae</taxon>
        <taxon>rosids</taxon>
        <taxon>malvids</taxon>
        <taxon>Brassicales</taxon>
        <taxon>Brassicaceae</taxon>
        <taxon>Camelineae</taxon>
        <taxon>Arabidopsis</taxon>
    </lineage>
</organism>
<feature type="chain" id="PRO_0000416129" description="Peptidyl-prolyl cis-trans isomerase FKBP15-3">
    <location>
        <begin position="1"/>
        <end position="143"/>
    </location>
</feature>
<feature type="domain" description="PPIase FKBP-type" evidence="2">
    <location>
        <begin position="56"/>
        <end position="143"/>
    </location>
</feature>
<accession>Q9FLB3</accession>
<accession>Q9SCY1</accession>
<gene>
    <name type="primary">FKBP15-3</name>
    <name type="ordered locus">At5g05420</name>
    <name type="ORF">K18I23.23</name>
</gene>
<reference key="1">
    <citation type="journal article" date="1998" name="DNA Res.">
        <title>Structural analysis of Arabidopsis thaliana chromosome 5. V. Sequence features of the regions of 1,381,565 bp covered by twenty one physically assigned P1 and TAC clones.</title>
        <authorList>
            <person name="Kaneko T."/>
            <person name="Kotani H."/>
            <person name="Nakamura Y."/>
            <person name="Sato S."/>
            <person name="Asamizu E."/>
            <person name="Miyajima N."/>
            <person name="Tabata S."/>
        </authorList>
    </citation>
    <scope>NUCLEOTIDE SEQUENCE [LARGE SCALE GENOMIC DNA]</scope>
    <source>
        <strain>cv. Columbia</strain>
    </source>
</reference>
<reference key="2">
    <citation type="journal article" date="2017" name="Plant J.">
        <title>Araport11: a complete reannotation of the Arabidopsis thaliana reference genome.</title>
        <authorList>
            <person name="Cheng C.Y."/>
            <person name="Krishnakumar V."/>
            <person name="Chan A.P."/>
            <person name="Thibaud-Nissen F."/>
            <person name="Schobel S."/>
            <person name="Town C.D."/>
        </authorList>
    </citation>
    <scope>GENOME REANNOTATION</scope>
    <source>
        <strain>cv. Columbia</strain>
    </source>
</reference>
<reference key="3">
    <citation type="journal article" date="2006" name="Plant Biotechnol. J.">
        <title>Simultaneous high-throughput recombinational cloning of open reading frames in closed and open configurations.</title>
        <authorList>
            <person name="Underwood B.A."/>
            <person name="Vanderhaeghen R."/>
            <person name="Whitford R."/>
            <person name="Town C.D."/>
            <person name="Hilson P."/>
        </authorList>
    </citation>
    <scope>NUCLEOTIDE SEQUENCE [LARGE SCALE MRNA]</scope>
    <source>
        <strain>cv. Columbia</strain>
    </source>
</reference>
<reference key="4">
    <citation type="submission" date="1999-05" db="EMBL/GenBank/DDBJ databases">
        <title>Structure and evolution of FKBP-like genes in Arabidopsis.</title>
        <authorList>
            <person name="Kolukisaoglu U."/>
            <person name="Billion K."/>
            <person name="Eckhoff A."/>
            <person name="Moeller A."/>
            <person name="Saal B."/>
            <person name="Wanke D."/>
            <person name="Schulz B."/>
        </authorList>
    </citation>
    <scope>NUCLEOTIDE SEQUENCE [MRNA] OF 74-138</scope>
</reference>
<reference key="5">
    <citation type="journal article" date="2004" name="Plant Physiol.">
        <title>Immunophilins and parvulins. Superfamily of peptidyl prolyl isomerases in Arabidopsis.</title>
        <authorList>
            <person name="He Z."/>
            <person name="Li L."/>
            <person name="Luan S."/>
        </authorList>
    </citation>
    <scope>GENE FAMILY</scope>
    <scope>NOMENCLATURE</scope>
</reference>
<proteinExistence type="evidence at transcript level"/>
<comment type="function">
    <text evidence="1">PPIases accelerate the folding of proteins. It catalyzes the cis-trans isomerization of proline imidic peptide bonds in oligopeptides (By similarity).</text>
</comment>
<comment type="catalytic activity">
    <reaction>
        <text>[protein]-peptidylproline (omega=180) = [protein]-peptidylproline (omega=0)</text>
        <dbReference type="Rhea" id="RHEA:16237"/>
        <dbReference type="Rhea" id="RHEA-COMP:10747"/>
        <dbReference type="Rhea" id="RHEA-COMP:10748"/>
        <dbReference type="ChEBI" id="CHEBI:83833"/>
        <dbReference type="ChEBI" id="CHEBI:83834"/>
        <dbReference type="EC" id="5.2.1.8"/>
    </reaction>
</comment>
<comment type="similarity">
    <text evidence="3">Belongs to the FKBP-type PPIase family.</text>
</comment>
<name>FK153_ARATH</name>
<protein>
    <recommendedName>
        <fullName>Peptidyl-prolyl cis-trans isomerase FKBP15-3</fullName>
        <shortName>PPIase FKBP15-3</shortName>
        <ecNumber>5.2.1.8</ecNumber>
    </recommendedName>
    <alternativeName>
        <fullName>15 kDa FK506-binding protein</fullName>
        <shortName>15 kDa FKBP</shortName>
    </alternativeName>
    <alternativeName>
        <fullName>FK506-binding protein 15-3</fullName>
        <shortName>AtFKBP15-3</shortName>
    </alternativeName>
    <alternativeName>
        <fullName>Immunophilin FKBP15-3</fullName>
    </alternativeName>
    <alternativeName>
        <fullName>Rotamase</fullName>
    </alternativeName>
</protein>
<evidence type="ECO:0000250" key="1"/>
<evidence type="ECO:0000255" key="2">
    <source>
        <dbReference type="PROSITE-ProRule" id="PRU00277"/>
    </source>
</evidence>
<evidence type="ECO:0000305" key="3"/>
<keyword id="KW-0413">Isomerase</keyword>
<keyword id="KW-1185">Reference proteome</keyword>
<keyword id="KW-0697">Rotamase</keyword>
<sequence>MSPSESAKKNEKISEEATVESKAFSISVEKQTPDLDGLIVEELCMGNPNGKKAEPGKRVSVHYTGKLQGNGKIFDSTVGKSRYKFRLDAGKVIKGLDVGLNGMLVGGKRKLTIPPEMGYGAEGAGSIPPDSWLVFDVELLNVK</sequence>